<feature type="chain" id="PRO_1000114744" description="Potassium-transporting ATPase KdpC subunit">
    <location>
        <begin position="1"/>
        <end position="209"/>
    </location>
</feature>
<feature type="transmembrane region" description="Helical" evidence="1">
    <location>
        <begin position="18"/>
        <end position="38"/>
    </location>
</feature>
<reference key="1">
    <citation type="journal article" date="2008" name="J. Biotechnol.">
        <title>The genome of Xanthomonas campestris pv. campestris B100 and its use for the reconstruction of metabolic pathways involved in xanthan biosynthesis.</title>
        <authorList>
            <person name="Vorhoelter F.-J."/>
            <person name="Schneiker S."/>
            <person name="Goesmann A."/>
            <person name="Krause L."/>
            <person name="Bekel T."/>
            <person name="Kaiser O."/>
            <person name="Linke B."/>
            <person name="Patschkowski T."/>
            <person name="Rueckert C."/>
            <person name="Schmid J."/>
            <person name="Sidhu V.K."/>
            <person name="Sieber V."/>
            <person name="Tauch A."/>
            <person name="Watt S.A."/>
            <person name="Weisshaar B."/>
            <person name="Becker A."/>
            <person name="Niehaus K."/>
            <person name="Puehler A."/>
        </authorList>
    </citation>
    <scope>NUCLEOTIDE SEQUENCE [LARGE SCALE GENOMIC DNA]</scope>
    <source>
        <strain>B100</strain>
    </source>
</reference>
<accession>B0RVC5</accession>
<evidence type="ECO:0000255" key="1">
    <source>
        <dbReference type="HAMAP-Rule" id="MF_00276"/>
    </source>
</evidence>
<protein>
    <recommendedName>
        <fullName evidence="1">Potassium-transporting ATPase KdpC subunit</fullName>
    </recommendedName>
    <alternativeName>
        <fullName evidence="1">ATP phosphohydrolase [potassium-transporting] C chain</fullName>
    </alternativeName>
    <alternativeName>
        <fullName evidence="1">Potassium-binding and translocating subunit C</fullName>
    </alternativeName>
    <alternativeName>
        <fullName evidence="1">Potassium-translocating ATPase C chain</fullName>
    </alternativeName>
</protein>
<comment type="function">
    <text evidence="1">Part of the high-affinity ATP-driven potassium transport (or Kdp) system, which catalyzes the hydrolysis of ATP coupled with the electrogenic transport of potassium into the cytoplasm. This subunit acts as a catalytic chaperone that increases the ATP-binding affinity of the ATP-hydrolyzing subunit KdpB by the formation of a transient KdpB/KdpC/ATP ternary complex.</text>
</comment>
<comment type="subunit">
    <text evidence="1">The system is composed of three essential subunits: KdpA, KdpB and KdpC.</text>
</comment>
<comment type="subcellular location">
    <subcellularLocation>
        <location evidence="1">Cell inner membrane</location>
        <topology evidence="1">Single-pass membrane protein</topology>
    </subcellularLocation>
</comment>
<comment type="similarity">
    <text evidence="1">Belongs to the KdpC family.</text>
</comment>
<gene>
    <name evidence="1" type="primary">kdpC</name>
    <name type="ordered locus">xcc-b100_3651</name>
</gene>
<sequence length="209" mass="21691">MSTSLPLRDDGAVRASFALALFVLLGLGLGYSLVATGITSALMPDQAHGSLLRADGRVIGSSLVAQPFADARYFQPRPSAAKYDPTAAAGSNQARSNPELLARIATARAEIAQRDGIAPDAVPGELLTQSGSGLDPHLSPAGAQVQLRRVAAARGWPEQRVAALLQAATEQPQFGLLGQPRINVLALNLALDRAGDGVPGTENGVEQQR</sequence>
<keyword id="KW-0067">ATP-binding</keyword>
<keyword id="KW-0997">Cell inner membrane</keyword>
<keyword id="KW-1003">Cell membrane</keyword>
<keyword id="KW-0406">Ion transport</keyword>
<keyword id="KW-0472">Membrane</keyword>
<keyword id="KW-0547">Nucleotide-binding</keyword>
<keyword id="KW-0630">Potassium</keyword>
<keyword id="KW-0633">Potassium transport</keyword>
<keyword id="KW-0812">Transmembrane</keyword>
<keyword id="KW-1133">Transmembrane helix</keyword>
<keyword id="KW-0813">Transport</keyword>
<name>KDPC_XANCB</name>
<organism>
    <name type="scientific">Xanthomonas campestris pv. campestris (strain B100)</name>
    <dbReference type="NCBI Taxonomy" id="509169"/>
    <lineage>
        <taxon>Bacteria</taxon>
        <taxon>Pseudomonadati</taxon>
        <taxon>Pseudomonadota</taxon>
        <taxon>Gammaproteobacteria</taxon>
        <taxon>Lysobacterales</taxon>
        <taxon>Lysobacteraceae</taxon>
        <taxon>Xanthomonas</taxon>
    </lineage>
</organism>
<dbReference type="EMBL" id="AM920689">
    <property type="protein sequence ID" value="CAP53016.1"/>
    <property type="molecule type" value="Genomic_DNA"/>
</dbReference>
<dbReference type="SMR" id="B0RVC5"/>
<dbReference type="KEGG" id="xca:xcc-b100_3651"/>
<dbReference type="HOGENOM" id="CLU_077094_2_0_6"/>
<dbReference type="Proteomes" id="UP000001188">
    <property type="component" value="Chromosome"/>
</dbReference>
<dbReference type="GO" id="GO:0005886">
    <property type="term" value="C:plasma membrane"/>
    <property type="evidence" value="ECO:0007669"/>
    <property type="project" value="UniProtKB-SubCell"/>
</dbReference>
<dbReference type="GO" id="GO:0005524">
    <property type="term" value="F:ATP binding"/>
    <property type="evidence" value="ECO:0007669"/>
    <property type="project" value="UniProtKB-UniRule"/>
</dbReference>
<dbReference type="GO" id="GO:0008556">
    <property type="term" value="F:P-type potassium transmembrane transporter activity"/>
    <property type="evidence" value="ECO:0007669"/>
    <property type="project" value="InterPro"/>
</dbReference>
<dbReference type="HAMAP" id="MF_00276">
    <property type="entry name" value="KdpC"/>
    <property type="match status" value="1"/>
</dbReference>
<dbReference type="InterPro" id="IPR003820">
    <property type="entry name" value="KdpC"/>
</dbReference>
<dbReference type="NCBIfam" id="TIGR00681">
    <property type="entry name" value="kdpC"/>
    <property type="match status" value="1"/>
</dbReference>
<dbReference type="NCBIfam" id="NF001454">
    <property type="entry name" value="PRK00315.1"/>
    <property type="match status" value="1"/>
</dbReference>
<dbReference type="PANTHER" id="PTHR30042">
    <property type="entry name" value="POTASSIUM-TRANSPORTING ATPASE C CHAIN"/>
    <property type="match status" value="1"/>
</dbReference>
<dbReference type="PANTHER" id="PTHR30042:SF2">
    <property type="entry name" value="POTASSIUM-TRANSPORTING ATPASE KDPC SUBUNIT"/>
    <property type="match status" value="1"/>
</dbReference>
<dbReference type="Pfam" id="PF02669">
    <property type="entry name" value="KdpC"/>
    <property type="match status" value="1"/>
</dbReference>
<dbReference type="PIRSF" id="PIRSF001296">
    <property type="entry name" value="K_ATPase_KdpC"/>
    <property type="match status" value="1"/>
</dbReference>
<proteinExistence type="inferred from homology"/>